<name>IDH_STAAN</name>
<proteinExistence type="evidence at protein level"/>
<organism>
    <name type="scientific">Staphylococcus aureus (strain N315)</name>
    <dbReference type="NCBI Taxonomy" id="158879"/>
    <lineage>
        <taxon>Bacteria</taxon>
        <taxon>Bacillati</taxon>
        <taxon>Bacillota</taxon>
        <taxon>Bacilli</taxon>
        <taxon>Bacillales</taxon>
        <taxon>Staphylococcaceae</taxon>
        <taxon>Staphylococcus</taxon>
    </lineage>
</organism>
<feature type="chain" id="PRO_0000083561" description="Isocitrate dehydrogenase [NADP]">
    <location>
        <begin position="1"/>
        <end position="422"/>
    </location>
</feature>
<feature type="binding site" evidence="1">
    <location>
        <position position="94"/>
    </location>
    <ligand>
        <name>NADP(+)</name>
        <dbReference type="ChEBI" id="CHEBI:58349"/>
    </ligand>
</feature>
<feature type="binding site" evidence="1">
    <location>
        <position position="103"/>
    </location>
    <ligand>
        <name>D-threo-isocitrate</name>
        <dbReference type="ChEBI" id="CHEBI:15562"/>
    </ligand>
</feature>
<feature type="binding site" evidence="1">
    <location>
        <position position="105"/>
    </location>
    <ligand>
        <name>D-threo-isocitrate</name>
        <dbReference type="ChEBI" id="CHEBI:15562"/>
    </ligand>
</feature>
<feature type="binding site" evidence="1">
    <location>
        <position position="109"/>
    </location>
    <ligand>
        <name>D-threo-isocitrate</name>
        <dbReference type="ChEBI" id="CHEBI:15562"/>
    </ligand>
</feature>
<feature type="binding site" evidence="1">
    <location>
        <position position="119"/>
    </location>
    <ligand>
        <name>D-threo-isocitrate</name>
        <dbReference type="ChEBI" id="CHEBI:15562"/>
    </ligand>
</feature>
<feature type="binding site" evidence="1">
    <location>
        <position position="143"/>
    </location>
    <ligand>
        <name>D-threo-isocitrate</name>
        <dbReference type="ChEBI" id="CHEBI:15562"/>
    </ligand>
</feature>
<feature type="binding site" evidence="1">
    <location>
        <position position="310"/>
    </location>
    <ligand>
        <name>Mg(2+)</name>
        <dbReference type="ChEBI" id="CHEBI:18420"/>
    </ligand>
</feature>
<feature type="binding site" evidence="1">
    <location>
        <begin position="344"/>
        <end position="350"/>
    </location>
    <ligand>
        <name>NADP(+)</name>
        <dbReference type="ChEBI" id="CHEBI:58349"/>
    </ligand>
</feature>
<feature type="binding site" evidence="1">
    <location>
        <position position="357"/>
    </location>
    <ligand>
        <name>NADP(+)</name>
        <dbReference type="ChEBI" id="CHEBI:58349"/>
    </ligand>
</feature>
<feature type="binding site" evidence="1">
    <location>
        <position position="396"/>
    </location>
    <ligand>
        <name>NADP(+)</name>
        <dbReference type="ChEBI" id="CHEBI:58349"/>
    </ligand>
</feature>
<feature type="binding site" evidence="1">
    <location>
        <position position="400"/>
    </location>
    <ligand>
        <name>NADP(+)</name>
        <dbReference type="ChEBI" id="CHEBI:58349"/>
    </ligand>
</feature>
<feature type="site" description="Critical for catalysis" evidence="1">
    <location>
        <position position="150"/>
    </location>
</feature>
<feature type="site" description="Critical for catalysis" evidence="1">
    <location>
        <position position="220"/>
    </location>
</feature>
<accession>P99167</accession>
<accession>Q99TG8</accession>
<protein>
    <recommendedName>
        <fullName>Isocitrate dehydrogenase [NADP]</fullName>
        <shortName>IDH</shortName>
        <ecNumber evidence="1">1.1.1.42</ecNumber>
    </recommendedName>
    <alternativeName>
        <fullName>IDP</fullName>
    </alternativeName>
    <alternativeName>
        <fullName>NADP(+)-specific ICDH</fullName>
    </alternativeName>
    <alternativeName>
        <fullName>Oxalosuccinate decarboxylase</fullName>
    </alternativeName>
</protein>
<dbReference type="EC" id="1.1.1.42" evidence="1"/>
<dbReference type="EMBL" id="BA000018">
    <property type="protein sequence ID" value="BAB42784.1"/>
    <property type="molecule type" value="Genomic_DNA"/>
</dbReference>
<dbReference type="PIR" id="C89953">
    <property type="entry name" value="C89953"/>
</dbReference>
<dbReference type="RefSeq" id="WP_000123165.1">
    <property type="nucleotide sequence ID" value="NC_002745.2"/>
</dbReference>
<dbReference type="SMR" id="P99167"/>
<dbReference type="EnsemblBacteria" id="BAB42784">
    <property type="protein sequence ID" value="BAB42784"/>
    <property type="gene ID" value="BAB42784"/>
</dbReference>
<dbReference type="KEGG" id="sau:SA1517"/>
<dbReference type="HOGENOM" id="CLU_031953_7_1_9"/>
<dbReference type="GO" id="GO:0004450">
    <property type="term" value="F:isocitrate dehydrogenase (NADP+) activity"/>
    <property type="evidence" value="ECO:0007669"/>
    <property type="project" value="UniProtKB-EC"/>
</dbReference>
<dbReference type="GO" id="GO:0000287">
    <property type="term" value="F:magnesium ion binding"/>
    <property type="evidence" value="ECO:0007669"/>
    <property type="project" value="InterPro"/>
</dbReference>
<dbReference type="GO" id="GO:0051287">
    <property type="term" value="F:NAD binding"/>
    <property type="evidence" value="ECO:0007669"/>
    <property type="project" value="InterPro"/>
</dbReference>
<dbReference type="GO" id="GO:0006097">
    <property type="term" value="P:glyoxylate cycle"/>
    <property type="evidence" value="ECO:0007669"/>
    <property type="project" value="UniProtKB-KW"/>
</dbReference>
<dbReference type="GO" id="GO:0006099">
    <property type="term" value="P:tricarboxylic acid cycle"/>
    <property type="evidence" value="ECO:0007669"/>
    <property type="project" value="UniProtKB-KW"/>
</dbReference>
<dbReference type="Gene3D" id="3.40.718.10">
    <property type="entry name" value="Isopropylmalate Dehydrogenase"/>
    <property type="match status" value="1"/>
</dbReference>
<dbReference type="InterPro" id="IPR019818">
    <property type="entry name" value="IsoCit/isopropylmalate_DH_CS"/>
</dbReference>
<dbReference type="InterPro" id="IPR004439">
    <property type="entry name" value="Isocitrate_DH_NADP_dimer_prok"/>
</dbReference>
<dbReference type="InterPro" id="IPR024084">
    <property type="entry name" value="IsoPropMal-DH-like_dom"/>
</dbReference>
<dbReference type="NCBIfam" id="NF005425">
    <property type="entry name" value="PRK07006.1"/>
    <property type="match status" value="1"/>
</dbReference>
<dbReference type="NCBIfam" id="TIGR00183">
    <property type="entry name" value="prok_nadp_idh"/>
    <property type="match status" value="1"/>
</dbReference>
<dbReference type="PANTHER" id="PTHR43504">
    <property type="entry name" value="ISOCITRATE DEHYDROGENASE [NADP]"/>
    <property type="match status" value="1"/>
</dbReference>
<dbReference type="PANTHER" id="PTHR43504:SF1">
    <property type="entry name" value="ISOCITRATE DEHYDROGENASE [NADP]"/>
    <property type="match status" value="1"/>
</dbReference>
<dbReference type="Pfam" id="PF00180">
    <property type="entry name" value="Iso_dh"/>
    <property type="match status" value="1"/>
</dbReference>
<dbReference type="SMART" id="SM01329">
    <property type="entry name" value="Iso_dh"/>
    <property type="match status" value="1"/>
</dbReference>
<dbReference type="SUPFAM" id="SSF53659">
    <property type="entry name" value="Isocitrate/Isopropylmalate dehydrogenase-like"/>
    <property type="match status" value="1"/>
</dbReference>
<dbReference type="PROSITE" id="PS00470">
    <property type="entry name" value="IDH_IMDH"/>
    <property type="match status" value="1"/>
</dbReference>
<sequence>MTAEKITQGTEGLNVPNEPIIPFIIGDGIGPDIWKAASRVIDAAVEKAYNGEKRIEWKEVLAGQKAFDTTGEWLPQETLDTIKEYLIAVKGPLTTPIGGGIRSLNVALRQELDLFTCLRPVRWFKGVPSPVKRPQDVDMVIFRENTEDIYAGIEFKEGTTEVKKVIDFLQNEMGATNIRFPETSGIGIKPVSKEGTERLVRAAIQYAIDNNRKSVTLVHKGNIMKFTEGSFKQWGYDLALSEFGDQVFTWQQYDEIVENEGRDAANAAQEKAEKEGKIIIKDSIADIFLQQILTRPAEHDVVATMNLNGDYISDALAAQVGGIGIAPGANINYETGHAIFEATHGTAPKYAGLNKVNPSSVILSSVLMLEHLGWQEAADKITDSIEDTIASKVVTYDFARLMDGAEEVSTSAFADELIKNLK</sequence>
<keyword id="KW-0329">Glyoxylate bypass</keyword>
<keyword id="KW-0460">Magnesium</keyword>
<keyword id="KW-0464">Manganese</keyword>
<keyword id="KW-0479">Metal-binding</keyword>
<keyword id="KW-0521">NADP</keyword>
<keyword id="KW-0560">Oxidoreductase</keyword>
<keyword id="KW-0816">Tricarboxylic acid cycle</keyword>
<gene>
    <name type="primary">icd</name>
    <name type="synonym">citC</name>
    <name type="ordered locus">SA1517</name>
</gene>
<comment type="function">
    <text evidence="1">Catalyzes the oxidative decarboxylation of isocitrate to 2-oxoglutarate and carbon dioxide with the concomitant reduction of NADP(+).</text>
</comment>
<comment type="catalytic activity">
    <reaction evidence="1">
        <text>D-threo-isocitrate + NADP(+) = 2-oxoglutarate + CO2 + NADPH</text>
        <dbReference type="Rhea" id="RHEA:19629"/>
        <dbReference type="ChEBI" id="CHEBI:15562"/>
        <dbReference type="ChEBI" id="CHEBI:16526"/>
        <dbReference type="ChEBI" id="CHEBI:16810"/>
        <dbReference type="ChEBI" id="CHEBI:57783"/>
        <dbReference type="ChEBI" id="CHEBI:58349"/>
        <dbReference type="EC" id="1.1.1.42"/>
    </reaction>
</comment>
<comment type="cofactor">
    <cofactor evidence="1">
        <name>Mg(2+)</name>
        <dbReference type="ChEBI" id="CHEBI:18420"/>
    </cofactor>
    <cofactor evidence="1">
        <name>Mn(2+)</name>
        <dbReference type="ChEBI" id="CHEBI:29035"/>
    </cofactor>
    <text evidence="1">Binds 1 Mg(2+) or Mn(2+) ion per subunit.</text>
</comment>
<comment type="subunit">
    <text evidence="1">Homodimer.</text>
</comment>
<comment type="similarity">
    <text evidence="2">Belongs to the isocitrate and isopropylmalate dehydrogenases family.</text>
</comment>
<reference key="1">
    <citation type="journal article" date="2001" name="Lancet">
        <title>Whole genome sequencing of meticillin-resistant Staphylococcus aureus.</title>
        <authorList>
            <person name="Kuroda M."/>
            <person name="Ohta T."/>
            <person name="Uchiyama I."/>
            <person name="Baba T."/>
            <person name="Yuzawa H."/>
            <person name="Kobayashi I."/>
            <person name="Cui L."/>
            <person name="Oguchi A."/>
            <person name="Aoki K."/>
            <person name="Nagai Y."/>
            <person name="Lian J.-Q."/>
            <person name="Ito T."/>
            <person name="Kanamori M."/>
            <person name="Matsumaru H."/>
            <person name="Maruyama A."/>
            <person name="Murakami H."/>
            <person name="Hosoyama A."/>
            <person name="Mizutani-Ui Y."/>
            <person name="Takahashi N.K."/>
            <person name="Sawano T."/>
            <person name="Inoue R."/>
            <person name="Kaito C."/>
            <person name="Sekimizu K."/>
            <person name="Hirakawa H."/>
            <person name="Kuhara S."/>
            <person name="Goto S."/>
            <person name="Yabuzaki J."/>
            <person name="Kanehisa M."/>
            <person name="Yamashita A."/>
            <person name="Oshima K."/>
            <person name="Furuya K."/>
            <person name="Yoshino C."/>
            <person name="Shiba T."/>
            <person name="Hattori M."/>
            <person name="Ogasawara N."/>
            <person name="Hayashi H."/>
            <person name="Hiramatsu K."/>
        </authorList>
    </citation>
    <scope>NUCLEOTIDE SEQUENCE [LARGE SCALE GENOMIC DNA]</scope>
    <source>
        <strain>N315</strain>
    </source>
</reference>
<reference key="2">
    <citation type="journal article" date="2005" name="J. Microbiol. Methods">
        <title>Correlation of proteomic and transcriptomic profiles of Staphylococcus aureus during the post-exponential phase of growth.</title>
        <authorList>
            <person name="Scherl A."/>
            <person name="Francois P."/>
            <person name="Bento M."/>
            <person name="Deshusses J.M."/>
            <person name="Charbonnier Y."/>
            <person name="Converset V."/>
            <person name="Huyghe A."/>
            <person name="Walter N."/>
            <person name="Hoogland C."/>
            <person name="Appel R.D."/>
            <person name="Sanchez J.-C."/>
            <person name="Zimmermann-Ivol C.G."/>
            <person name="Corthals G.L."/>
            <person name="Hochstrasser D.F."/>
            <person name="Schrenzel J."/>
        </authorList>
    </citation>
    <scope>IDENTIFICATION BY MASS SPECTROMETRY</scope>
    <source>
        <strain>N315</strain>
    </source>
</reference>
<reference key="3">
    <citation type="submission" date="2007-10" db="UniProtKB">
        <title>Shotgun proteomic analysis of total and membrane protein extracts of S. aureus strain N315.</title>
        <authorList>
            <person name="Vaezzadeh A.R."/>
            <person name="Deshusses J."/>
            <person name="Lescuyer P."/>
            <person name="Hochstrasser D.F."/>
        </authorList>
    </citation>
    <scope>IDENTIFICATION BY MASS SPECTROMETRY [LARGE SCALE ANALYSIS]</scope>
    <source>
        <strain>N315</strain>
    </source>
</reference>
<evidence type="ECO:0000250" key="1">
    <source>
        <dbReference type="UniProtKB" id="P08200"/>
    </source>
</evidence>
<evidence type="ECO:0000305" key="2"/>